<evidence type="ECO:0000250" key="1"/>
<evidence type="ECO:0000256" key="2">
    <source>
        <dbReference type="SAM" id="MobiDB-lite"/>
    </source>
</evidence>
<evidence type="ECO:0000305" key="3"/>
<name>PHOSP_HIRRV</name>
<keyword id="KW-0143">Chaperone</keyword>
<keyword id="KW-1035">Host cytoplasm</keyword>
<keyword id="KW-0597">Phosphoprotein</keyword>
<keyword id="KW-0693">Viral RNA replication</keyword>
<keyword id="KW-0946">Virion</keyword>
<feature type="chain" id="PRO_0000299205" description="Phosphoprotein">
    <location>
        <begin position="1"/>
        <end position="227"/>
    </location>
</feature>
<feature type="region of interest" description="Disordered" evidence="2">
    <location>
        <begin position="24"/>
        <end position="60"/>
    </location>
</feature>
<comment type="function">
    <text evidence="1">Non catalytic polymerase cofactor and regulatory protein that plays a role in viral transcription and replication. Stabilizes the RNA polymerase L to the N-RNA template and binds the soluble protein N, preventing it from encapsidating non-genomic RNA (By similarity).</text>
</comment>
<comment type="subunit">
    <text evidence="1">Homotrimer when phosphorylated. This trimer is stabilized by binding to the L protein. Binds soluble protein N, and ribonucleocapsid (By similarity).</text>
</comment>
<comment type="subcellular location">
    <subcellularLocation>
        <location>Virion</location>
    </subcellularLocation>
    <subcellularLocation>
        <location evidence="1">Host cytoplasm</location>
    </subcellularLocation>
</comment>
<comment type="PTM">
    <text evidence="1">Phosphorylated by host kinases.</text>
</comment>
<comment type="similarity">
    <text evidence="3">Belongs to the novirhabdovirus protein P family.</text>
</comment>
<accession>Q82037</accession>
<sequence length="227" mass="25780">MSDNEGEQFFDIPKNALDRVEARTMCPREDGKVVRKQAPLKEEPRLEAEQKRSPKKQEKPRGMLPLEQLVLKYVVVVCSLDALREFGGLIAQIRQSHQADMTRHLEAVATEHRANLQALTKSQQEHEKVSKEILSAVISIRSNLNENSSPRHKPLDLDQVNAERALGFGVGYRTALNVFGKLRGITPEEAGSQEVKNMAIREAEEDEYEGSRSFFKKVLDMVKKTMR</sequence>
<protein>
    <recommendedName>
        <fullName>Phosphoprotein</fullName>
        <shortName>Protein P</shortName>
    </recommendedName>
    <alternativeName>
        <fullName>Protein M1</fullName>
    </alternativeName>
</protein>
<reference key="1">
    <citation type="journal article" date="1995" name="Vet. Res.">
        <title>Nucleotide sequence of the 2 matrix protein genes (M1 and M2) of hirame rhabdovirus (HRV), a fish rhabdovirus.</title>
        <authorList>
            <person name="Nishizawa T."/>
            <person name="Kurath G."/>
            <person name="Winton J.R."/>
        </authorList>
    </citation>
    <scope>NUCLEOTIDE SEQUENCE [GENOMIC RNA]</scope>
    <source>
        <strain>8401-H</strain>
    </source>
</reference>
<reference key="2">
    <citation type="journal article" date="2005" name="Virus Res.">
        <title>Complete nucleotide sequence of the hirame rhabdovirus, a pathogen of marine fish.</title>
        <authorList>
            <person name="Kim D.H."/>
            <person name="Oh H.K."/>
            <person name="Eou J.I."/>
            <person name="Seo H.J."/>
            <person name="Kim S.K."/>
            <person name="Oh M.J."/>
            <person name="Nam S.W."/>
            <person name="Choi T.J."/>
        </authorList>
    </citation>
    <scope>NUCLEOTIDE SEQUENCE [GENOMIC RNA]</scope>
</reference>
<proteinExistence type="inferred from homology"/>
<organismHost>
    <name type="scientific">Acanthopagrus schlegelii</name>
    <name type="common">Black porgy</name>
    <dbReference type="NCBI Taxonomy" id="72011"/>
</organismHost>
<organismHost>
    <name type="scientific">Paralichthys olivaceus</name>
    <name type="common">Bastard halibut</name>
    <name type="synonym">Hippoglossus olivaceus</name>
    <dbReference type="NCBI Taxonomy" id="8255"/>
</organismHost>
<organismHost>
    <name type="scientific">Plecoglossus altivelis</name>
    <name type="common">Ayu</name>
    <dbReference type="NCBI Taxonomy" id="61084"/>
</organismHost>
<organismHost>
    <name type="scientific">Sebastes inermis</name>
    <name type="common">Dark-banded rockfish</name>
    <dbReference type="NCBI Taxonomy" id="160818"/>
</organismHost>
<dbReference type="EMBL" id="AF104985">
    <property type="protein sequence ID" value="AAQ73458.1"/>
    <property type="molecule type" value="Genomic_RNA"/>
</dbReference>
<dbReference type="EMBL" id="D45422">
    <property type="protein sequence ID" value="BAA08262.1"/>
    <property type="molecule type" value="Genomic_RNA"/>
</dbReference>
<dbReference type="SMR" id="Q82037"/>
<dbReference type="KEGG" id="vg:2559535"/>
<dbReference type="Proteomes" id="UP000008118">
    <property type="component" value="Segment"/>
</dbReference>
<dbReference type="GO" id="GO:0030430">
    <property type="term" value="C:host cell cytoplasm"/>
    <property type="evidence" value="ECO:0007669"/>
    <property type="project" value="UniProtKB-SubCell"/>
</dbReference>
<dbReference type="GO" id="GO:0044423">
    <property type="term" value="C:virion component"/>
    <property type="evidence" value="ECO:0007669"/>
    <property type="project" value="UniProtKB-KW"/>
</dbReference>
<dbReference type="InterPro" id="IPR005010">
    <property type="entry name" value="Rhabdo_M1"/>
</dbReference>
<dbReference type="Pfam" id="PF03342">
    <property type="entry name" value="Rhabdo_M1"/>
    <property type="match status" value="1"/>
</dbReference>
<organism>
    <name type="scientific">Hirame rhabdovirus (strain Korea/CA 9703/1997)</name>
    <name type="common">HIRRV</name>
    <dbReference type="NCBI Taxonomy" id="453457"/>
    <lineage>
        <taxon>Viruses</taxon>
        <taxon>Riboviria</taxon>
        <taxon>Orthornavirae</taxon>
        <taxon>Negarnaviricota</taxon>
        <taxon>Haploviricotina</taxon>
        <taxon>Monjiviricetes</taxon>
        <taxon>Mononegavirales</taxon>
        <taxon>Rhabdoviridae</taxon>
        <taxon>Gammarhabdovirinae</taxon>
        <taxon>Novirhabdovirus</taxon>
        <taxon>Novirhabdovirus hirame</taxon>
    </lineage>
</organism>
<gene>
    <name type="primary">P</name>
</gene>